<organism>
    <name type="scientific">Wolinella succinogenes (strain ATCC 29543 / DSM 1740 / CCUG 13145 / JCM 31913 / LMG 7466 / NCTC 11488 / FDC 602W)</name>
    <name type="common">Vibrio succinogenes</name>
    <dbReference type="NCBI Taxonomy" id="273121"/>
    <lineage>
        <taxon>Bacteria</taxon>
        <taxon>Pseudomonadati</taxon>
        <taxon>Campylobacterota</taxon>
        <taxon>Epsilonproteobacteria</taxon>
        <taxon>Campylobacterales</taxon>
        <taxon>Helicobacteraceae</taxon>
        <taxon>Wolinella</taxon>
    </lineage>
</organism>
<reference key="1">
    <citation type="journal article" date="2003" name="Proc. Natl. Acad. Sci. U.S.A.">
        <title>Complete genome sequence and analysis of Wolinella succinogenes.</title>
        <authorList>
            <person name="Baar C."/>
            <person name="Eppinger M."/>
            <person name="Raddatz G."/>
            <person name="Simon J."/>
            <person name="Lanz C."/>
            <person name="Klimmek O."/>
            <person name="Nandakumar R."/>
            <person name="Gross R."/>
            <person name="Rosinus A."/>
            <person name="Keller H."/>
            <person name="Jagtap P."/>
            <person name="Linke B."/>
            <person name="Meyer F."/>
            <person name="Lederer H."/>
            <person name="Schuster S.C."/>
        </authorList>
    </citation>
    <scope>NUCLEOTIDE SEQUENCE [LARGE SCALE GENOMIC DNA]</scope>
    <source>
        <strain>ATCC 29543 / DSM 1740 / CCUG 13145 / JCM 31913 / LMG 7466 / NCTC 11488 / FDC 602W</strain>
    </source>
</reference>
<comment type="function">
    <text evidence="1">IF-3 binds to the 30S ribosomal subunit and shifts the equilibrium between 70S ribosomes and their 50S and 30S subunits in favor of the free subunits, thus enhancing the availability of 30S subunits on which protein synthesis initiation begins.</text>
</comment>
<comment type="subunit">
    <text evidence="1">Monomer.</text>
</comment>
<comment type="subcellular location">
    <subcellularLocation>
        <location evidence="1">Cytoplasm</location>
    </subcellularLocation>
</comment>
<comment type="similarity">
    <text evidence="1">Belongs to the IF-3 family.</text>
</comment>
<dbReference type="EMBL" id="BX571659">
    <property type="protein sequence ID" value="CAE09934.1"/>
    <property type="molecule type" value="Genomic_DNA"/>
</dbReference>
<dbReference type="RefSeq" id="WP_011138731.1">
    <property type="nucleotide sequence ID" value="NC_005090.1"/>
</dbReference>
<dbReference type="SMR" id="Q7M9L9"/>
<dbReference type="STRING" id="273121.WS0821"/>
<dbReference type="KEGG" id="wsu:WS0821"/>
<dbReference type="eggNOG" id="COG0290">
    <property type="taxonomic scope" value="Bacteria"/>
</dbReference>
<dbReference type="HOGENOM" id="CLU_054919_3_2_7"/>
<dbReference type="Proteomes" id="UP000000422">
    <property type="component" value="Chromosome"/>
</dbReference>
<dbReference type="GO" id="GO:0005829">
    <property type="term" value="C:cytosol"/>
    <property type="evidence" value="ECO:0007669"/>
    <property type="project" value="TreeGrafter"/>
</dbReference>
<dbReference type="GO" id="GO:0016020">
    <property type="term" value="C:membrane"/>
    <property type="evidence" value="ECO:0007669"/>
    <property type="project" value="TreeGrafter"/>
</dbReference>
<dbReference type="GO" id="GO:0043022">
    <property type="term" value="F:ribosome binding"/>
    <property type="evidence" value="ECO:0007669"/>
    <property type="project" value="TreeGrafter"/>
</dbReference>
<dbReference type="GO" id="GO:0003743">
    <property type="term" value="F:translation initiation factor activity"/>
    <property type="evidence" value="ECO:0007669"/>
    <property type="project" value="UniProtKB-UniRule"/>
</dbReference>
<dbReference type="GO" id="GO:0032790">
    <property type="term" value="P:ribosome disassembly"/>
    <property type="evidence" value="ECO:0007669"/>
    <property type="project" value="TreeGrafter"/>
</dbReference>
<dbReference type="FunFam" id="3.10.20.80:FF:000001">
    <property type="entry name" value="Translation initiation factor IF-3"/>
    <property type="match status" value="1"/>
</dbReference>
<dbReference type="Gene3D" id="3.30.110.10">
    <property type="entry name" value="Translation initiation factor 3 (IF-3), C-terminal domain"/>
    <property type="match status" value="1"/>
</dbReference>
<dbReference type="Gene3D" id="3.10.20.80">
    <property type="entry name" value="Translation initiation factor 3 (IF-3), N-terminal domain"/>
    <property type="match status" value="1"/>
</dbReference>
<dbReference type="HAMAP" id="MF_00080">
    <property type="entry name" value="IF_3"/>
    <property type="match status" value="1"/>
</dbReference>
<dbReference type="InterPro" id="IPR036788">
    <property type="entry name" value="T_IF-3_C_sf"/>
</dbReference>
<dbReference type="InterPro" id="IPR036787">
    <property type="entry name" value="T_IF-3_N_sf"/>
</dbReference>
<dbReference type="InterPro" id="IPR019813">
    <property type="entry name" value="Translation_initiation_fac3_CS"/>
</dbReference>
<dbReference type="InterPro" id="IPR001288">
    <property type="entry name" value="Translation_initiation_fac_3"/>
</dbReference>
<dbReference type="InterPro" id="IPR019815">
    <property type="entry name" value="Translation_initiation_fac_3_C"/>
</dbReference>
<dbReference type="InterPro" id="IPR019814">
    <property type="entry name" value="Translation_initiation_fac_3_N"/>
</dbReference>
<dbReference type="NCBIfam" id="TIGR00168">
    <property type="entry name" value="infC"/>
    <property type="match status" value="1"/>
</dbReference>
<dbReference type="PANTHER" id="PTHR10938">
    <property type="entry name" value="TRANSLATION INITIATION FACTOR IF-3"/>
    <property type="match status" value="1"/>
</dbReference>
<dbReference type="PANTHER" id="PTHR10938:SF0">
    <property type="entry name" value="TRANSLATION INITIATION FACTOR IF-3, MITOCHONDRIAL"/>
    <property type="match status" value="1"/>
</dbReference>
<dbReference type="Pfam" id="PF00707">
    <property type="entry name" value="IF3_C"/>
    <property type="match status" value="1"/>
</dbReference>
<dbReference type="Pfam" id="PF05198">
    <property type="entry name" value="IF3_N"/>
    <property type="match status" value="1"/>
</dbReference>
<dbReference type="SUPFAM" id="SSF55200">
    <property type="entry name" value="Translation initiation factor IF3, C-terminal domain"/>
    <property type="match status" value="1"/>
</dbReference>
<dbReference type="SUPFAM" id="SSF54364">
    <property type="entry name" value="Translation initiation factor IF3, N-terminal domain"/>
    <property type="match status" value="1"/>
</dbReference>
<dbReference type="PROSITE" id="PS00938">
    <property type="entry name" value="IF3"/>
    <property type="match status" value="1"/>
</dbReference>
<protein>
    <recommendedName>
        <fullName evidence="1">Translation initiation factor IF-3</fullName>
    </recommendedName>
</protein>
<evidence type="ECO:0000255" key="1">
    <source>
        <dbReference type="HAMAP-Rule" id="MF_00080"/>
    </source>
</evidence>
<gene>
    <name evidence="1" type="primary">infC</name>
    <name type="ordered locus">WS0821</name>
</gene>
<keyword id="KW-0963">Cytoplasm</keyword>
<keyword id="KW-0396">Initiation factor</keyword>
<keyword id="KW-0648">Protein biosynthesis</keyword>
<keyword id="KW-1185">Reference proteome</keyword>
<name>IF3_WOLSU</name>
<feature type="chain" id="PRO_0000177606" description="Translation initiation factor IF-3">
    <location>
        <begin position="1"/>
        <end position="176"/>
    </location>
</feature>
<sequence length="176" mass="20373">MSKNNDTTLLNEEIRFPEVRCLGDEGTQYGVVSSSEALKIAQDLGLDLVLIAPEAKPPVCKIMDYGKFRYQQEKKQKEAKKKQKQIEIKEIKLSVKIAQNDVNYKVKHAKEFLEEDKHVRFRVFLKGREMSEPQSGVEVLKRVWELVEDIAIMDKEPKPEGRYVNMTVIPKPKKVK</sequence>
<accession>Q7M9L9</accession>
<proteinExistence type="inferred from homology"/>